<evidence type="ECO:0000250" key="1"/>
<evidence type="ECO:0000305" key="2"/>
<proteinExistence type="inferred from homology"/>
<organism>
    <name type="scientific">Salmonella typhimurium (strain LT2 / SGSC1412 / ATCC 700720)</name>
    <dbReference type="NCBI Taxonomy" id="99287"/>
    <lineage>
        <taxon>Bacteria</taxon>
        <taxon>Pseudomonadati</taxon>
        <taxon>Pseudomonadota</taxon>
        <taxon>Gammaproteobacteria</taxon>
        <taxon>Enterobacterales</taxon>
        <taxon>Enterobacteriaceae</taxon>
        <taxon>Salmonella</taxon>
    </lineage>
</organism>
<comment type="function">
    <text>Protein L10 is also a translational repressor protein. It controls the translation of the rplJL-rpoBC operon by binding to its mRNA.</text>
</comment>
<comment type="function">
    <text evidence="1">Forms part of the ribosomal stalk, playing a central role in the interaction of the ribosome with GTP-bound translation factors.</text>
</comment>
<comment type="subunit">
    <text evidence="1">Part of the ribosomal stalk of the 50S ribosomal subunit. The N-terminus interacts with L11 and the large rRNA to form the base of the stalk. The C-terminus forms an elongated spine to which L12 dimers bind in a sequential fashion forming a multimeric L10(L12)X complex (By similarity).</text>
</comment>
<comment type="miscellaneous">
    <text>Ribosomal protein L8 appears to be an aggregate of ribosomal proteins L7/L12 and L10.</text>
</comment>
<comment type="similarity">
    <text evidence="2">Belongs to the universal ribosomal protein uL10 family.</text>
</comment>
<reference key="1">
    <citation type="journal article" date="1990" name="Nucleic Acids Res.">
        <title>The nucleotide sequence of gene rpIJ encoding ribosomal protein L10 of Salmonella typhimurium.</title>
        <authorList>
            <person name="Paton E.B."/>
            <person name="Zolotukhin S.B."/>
            <person name="Woodmaska M.I."/>
            <person name="Kroupskaya I.V."/>
            <person name="Zhyvoloup A.N."/>
        </authorList>
    </citation>
    <scope>NUCLEOTIDE SEQUENCE [GENOMIC DNA]</scope>
    <source>
        <strain>LT2</strain>
    </source>
</reference>
<reference key="2">
    <citation type="journal article" date="1990" name="Nucleic Acids Res.">
        <title>Nucleotide sequence of the rplJL operon and the deduced primary structure of the encoded L10 and L7/L12 proteins of Salmonella typhimurium compared to that of Escherichia coli.</title>
        <authorList>
            <person name="Zhyvoloup A.N."/>
            <person name="Woodmaska M.I."/>
            <person name="Kroupskaya I.V."/>
            <person name="Paton E.B."/>
        </authorList>
    </citation>
    <scope>NUCLEOTIDE SEQUENCE [GENOMIC DNA]</scope>
    <source>
        <strain>LT2</strain>
    </source>
</reference>
<reference key="3">
    <citation type="journal article" date="1990" name="FEBS Lett.">
        <title>Evidence for the ability of L10 ribosomal proteins of Salmonella typhimurium and Klebsiella pneumoniae to regulate rplJL gene expression in Escherichia coli.</title>
        <authorList>
            <person name="Paton E.B."/>
            <person name="Woodmaska M.I."/>
            <person name="Kroupskaya I.V."/>
            <person name="Zhyvoloup A.N."/>
            <person name="Matsuka G.K."/>
        </authorList>
    </citation>
    <scope>NUCLEOTIDE SEQUENCE [GENOMIC DNA]</scope>
    <source>
        <strain>LT2</strain>
    </source>
</reference>
<reference key="4">
    <citation type="journal article" date="2001" name="Nature">
        <title>Complete genome sequence of Salmonella enterica serovar Typhimurium LT2.</title>
        <authorList>
            <person name="McClelland M."/>
            <person name="Sanderson K.E."/>
            <person name="Spieth J."/>
            <person name="Clifton S.W."/>
            <person name="Latreille P."/>
            <person name="Courtney L."/>
            <person name="Porwollik S."/>
            <person name="Ali J."/>
            <person name="Dante M."/>
            <person name="Du F."/>
            <person name="Hou S."/>
            <person name="Layman D."/>
            <person name="Leonard S."/>
            <person name="Nguyen C."/>
            <person name="Scott K."/>
            <person name="Holmes A."/>
            <person name="Grewal N."/>
            <person name="Mulvaney E."/>
            <person name="Ryan E."/>
            <person name="Sun H."/>
            <person name="Florea L."/>
            <person name="Miller W."/>
            <person name="Stoneking T."/>
            <person name="Nhan M."/>
            <person name="Waterston R."/>
            <person name="Wilson R.K."/>
        </authorList>
    </citation>
    <scope>NUCLEOTIDE SEQUENCE [LARGE SCALE GENOMIC DNA]</scope>
    <source>
        <strain>LT2 / SGSC1412 / ATCC 700720</strain>
    </source>
</reference>
<keyword id="KW-1185">Reference proteome</keyword>
<keyword id="KW-0678">Repressor</keyword>
<keyword id="KW-0687">Ribonucleoprotein</keyword>
<keyword id="KW-0689">Ribosomal protein</keyword>
<keyword id="KW-0694">RNA-binding</keyword>
<keyword id="KW-0699">rRNA-binding</keyword>
<keyword id="KW-0810">Translation regulation</keyword>
<name>RL10_SALTY</name>
<accession>P0A297</accession>
<accession>P17352</accession>
<gene>
    <name type="primary">rplJ</name>
    <name type="ordered locus">STM4151</name>
    <name type="ORF">STMF1.10</name>
</gene>
<dbReference type="EMBL" id="X17216">
    <property type="protein sequence ID" value="CAA35085.1"/>
    <property type="molecule type" value="Genomic_DNA"/>
</dbReference>
<dbReference type="EMBL" id="X53072">
    <property type="protein sequence ID" value="CAA37245.1"/>
    <property type="molecule type" value="Genomic_DNA"/>
</dbReference>
<dbReference type="EMBL" id="AF170176">
    <property type="protein sequence ID" value="AAF33497.1"/>
    <property type="molecule type" value="Genomic_DNA"/>
</dbReference>
<dbReference type="EMBL" id="AE006468">
    <property type="protein sequence ID" value="AAL22979.1"/>
    <property type="molecule type" value="Genomic_DNA"/>
</dbReference>
<dbReference type="PIR" id="S10895">
    <property type="entry name" value="R5EB10"/>
</dbReference>
<dbReference type="RefSeq" id="NP_463020.1">
    <property type="nucleotide sequence ID" value="NC_003197.2"/>
</dbReference>
<dbReference type="RefSeq" id="WP_001207203.1">
    <property type="nucleotide sequence ID" value="NC_003197.2"/>
</dbReference>
<dbReference type="STRING" id="99287.STM4151"/>
<dbReference type="PaxDb" id="99287-STM4151"/>
<dbReference type="GeneID" id="1255677"/>
<dbReference type="GeneID" id="93756505"/>
<dbReference type="KEGG" id="stm:STM4151"/>
<dbReference type="PATRIC" id="fig|99287.12.peg.4363"/>
<dbReference type="HOGENOM" id="CLU_092227_0_2_6"/>
<dbReference type="OMA" id="VRDQKQA"/>
<dbReference type="PhylomeDB" id="P0A297"/>
<dbReference type="BioCyc" id="SENT99287:STM4151-MONOMER"/>
<dbReference type="Proteomes" id="UP000001014">
    <property type="component" value="Chromosome"/>
</dbReference>
<dbReference type="GO" id="GO:0022625">
    <property type="term" value="C:cytosolic large ribosomal subunit"/>
    <property type="evidence" value="ECO:0000318"/>
    <property type="project" value="GO_Central"/>
</dbReference>
<dbReference type="GO" id="GO:0070180">
    <property type="term" value="F:large ribosomal subunit rRNA binding"/>
    <property type="evidence" value="ECO:0007669"/>
    <property type="project" value="UniProtKB-UniRule"/>
</dbReference>
<dbReference type="GO" id="GO:0003735">
    <property type="term" value="F:structural constituent of ribosome"/>
    <property type="evidence" value="ECO:0000318"/>
    <property type="project" value="GO_Central"/>
</dbReference>
<dbReference type="GO" id="GO:0006417">
    <property type="term" value="P:regulation of translation"/>
    <property type="evidence" value="ECO:0007669"/>
    <property type="project" value="UniProtKB-KW"/>
</dbReference>
<dbReference type="GO" id="GO:0006412">
    <property type="term" value="P:translation"/>
    <property type="evidence" value="ECO:0000318"/>
    <property type="project" value="GO_Central"/>
</dbReference>
<dbReference type="CDD" id="cd05797">
    <property type="entry name" value="Ribosomal_L10"/>
    <property type="match status" value="1"/>
</dbReference>
<dbReference type="FunFam" id="3.30.70.1730:FF:000001">
    <property type="entry name" value="50S ribosomal protein L10"/>
    <property type="match status" value="1"/>
</dbReference>
<dbReference type="Gene3D" id="3.30.70.1730">
    <property type="match status" value="1"/>
</dbReference>
<dbReference type="Gene3D" id="6.10.250.2350">
    <property type="match status" value="1"/>
</dbReference>
<dbReference type="HAMAP" id="MF_00362">
    <property type="entry name" value="Ribosomal_uL10"/>
    <property type="match status" value="1"/>
</dbReference>
<dbReference type="InterPro" id="IPR001790">
    <property type="entry name" value="Ribosomal_uL10"/>
</dbReference>
<dbReference type="InterPro" id="IPR043141">
    <property type="entry name" value="Ribosomal_uL10-like_sf"/>
</dbReference>
<dbReference type="InterPro" id="IPR022973">
    <property type="entry name" value="Ribosomal_uL10_bac"/>
</dbReference>
<dbReference type="InterPro" id="IPR047865">
    <property type="entry name" value="Ribosomal_uL10_bac_type"/>
</dbReference>
<dbReference type="InterPro" id="IPR002363">
    <property type="entry name" value="Ribosomal_uL10_CS_bac"/>
</dbReference>
<dbReference type="NCBIfam" id="NF000955">
    <property type="entry name" value="PRK00099.1-1"/>
    <property type="match status" value="1"/>
</dbReference>
<dbReference type="PANTHER" id="PTHR11560">
    <property type="entry name" value="39S RIBOSOMAL PROTEIN L10, MITOCHONDRIAL"/>
    <property type="match status" value="1"/>
</dbReference>
<dbReference type="Pfam" id="PF00466">
    <property type="entry name" value="Ribosomal_L10"/>
    <property type="match status" value="1"/>
</dbReference>
<dbReference type="SUPFAM" id="SSF160369">
    <property type="entry name" value="Ribosomal protein L10-like"/>
    <property type="match status" value="1"/>
</dbReference>
<dbReference type="PROSITE" id="PS01109">
    <property type="entry name" value="RIBOSOMAL_L10"/>
    <property type="match status" value="1"/>
</dbReference>
<feature type="initiator methionine" description="Removed" evidence="1">
    <location>
        <position position="1"/>
    </location>
</feature>
<feature type="chain" id="PRO_0000154701" description="Large ribosomal subunit protein uL10">
    <location>
        <begin position="2"/>
        <end position="165"/>
    </location>
</feature>
<sequence length="165" mass="17801">MALNLQDKQAIVAEVSEVAKGALSAVVADSRGVTVDKMTELRKAGREAGVYMRVVRNTLLRRVVEGTQFECLKDTFVGPTLIAYSMEHPGAAARLFKEFAKANAKFEVKAAAFEGELIPASQIDRLATLPTYEEAIARLMATMKEASAGKLVRTLAAVRDAKEAA</sequence>
<protein>
    <recommendedName>
        <fullName evidence="2">Large ribosomal subunit protein uL10</fullName>
    </recommendedName>
    <alternativeName>
        <fullName>50S ribosomal protein L10</fullName>
    </alternativeName>
</protein>